<name>EUTC_SALPC</name>
<comment type="function">
    <text evidence="1">Catalyzes the deamination of various vicinal amino-alcohols to oxo compounds. Allows this organism to utilize ethanolamine as the sole source of nitrogen and carbon in the presence of external vitamin B12.</text>
</comment>
<comment type="catalytic activity">
    <reaction evidence="1">
        <text>ethanolamine = acetaldehyde + NH4(+)</text>
        <dbReference type="Rhea" id="RHEA:15313"/>
        <dbReference type="ChEBI" id="CHEBI:15343"/>
        <dbReference type="ChEBI" id="CHEBI:28938"/>
        <dbReference type="ChEBI" id="CHEBI:57603"/>
        <dbReference type="EC" id="4.3.1.7"/>
    </reaction>
</comment>
<comment type="cofactor">
    <cofactor evidence="1">
        <name>adenosylcob(III)alamin</name>
        <dbReference type="ChEBI" id="CHEBI:18408"/>
    </cofactor>
    <text evidence="1">Binds between the large and small subunits.</text>
</comment>
<comment type="pathway">
    <text evidence="1">Amine and polyamine degradation; ethanolamine degradation.</text>
</comment>
<comment type="subunit">
    <text evidence="1">The basic unit is a heterodimer which dimerizes to form tetramers. The heterotetramers trimerize; 6 large subunits form a core ring with 6 small subunits projecting outwards.</text>
</comment>
<comment type="subcellular location">
    <subcellularLocation>
        <location evidence="1">Bacterial microcompartment</location>
    </subcellularLocation>
</comment>
<comment type="similarity">
    <text evidence="1">Belongs to the EutC family.</text>
</comment>
<feature type="chain" id="PRO_1000147055" description="Ethanolamine ammonia-lyase small subunit">
    <location>
        <begin position="1"/>
        <end position="298"/>
    </location>
</feature>
<feature type="binding site" evidence="1">
    <location>
        <position position="210"/>
    </location>
    <ligand>
        <name>adenosylcob(III)alamin</name>
        <dbReference type="ChEBI" id="CHEBI:18408"/>
    </ligand>
</feature>
<feature type="binding site" evidence="1">
    <location>
        <position position="231"/>
    </location>
    <ligand>
        <name>adenosylcob(III)alamin</name>
        <dbReference type="ChEBI" id="CHEBI:18408"/>
    </ligand>
</feature>
<feature type="binding site" evidence="1">
    <location>
        <position position="261"/>
    </location>
    <ligand>
        <name>adenosylcob(III)alamin</name>
        <dbReference type="ChEBI" id="CHEBI:18408"/>
    </ligand>
</feature>
<gene>
    <name evidence="1" type="primary">eutC</name>
    <name type="ordered locus">SPC_1202</name>
</gene>
<protein>
    <recommendedName>
        <fullName evidence="1">Ethanolamine ammonia-lyase small subunit</fullName>
        <shortName evidence="1">EAL small subunit</shortName>
        <ecNumber evidence="1">4.3.1.7</ecNumber>
    </recommendedName>
</protein>
<reference key="1">
    <citation type="journal article" date="2009" name="PLoS ONE">
        <title>Salmonella paratyphi C: genetic divergence from Salmonella choleraesuis and pathogenic convergence with Salmonella typhi.</title>
        <authorList>
            <person name="Liu W.-Q."/>
            <person name="Feng Y."/>
            <person name="Wang Y."/>
            <person name="Zou Q.-H."/>
            <person name="Chen F."/>
            <person name="Guo J.-T."/>
            <person name="Peng Y.-H."/>
            <person name="Jin Y."/>
            <person name="Li Y.-G."/>
            <person name="Hu S.-N."/>
            <person name="Johnston R.N."/>
            <person name="Liu G.-R."/>
            <person name="Liu S.-L."/>
        </authorList>
    </citation>
    <scope>NUCLEOTIDE SEQUENCE [LARGE SCALE GENOMIC DNA]</scope>
    <source>
        <strain>RKS4594</strain>
    </source>
</reference>
<dbReference type="EC" id="4.3.1.7" evidence="1"/>
<dbReference type="EMBL" id="CP000857">
    <property type="protein sequence ID" value="ACN45366.1"/>
    <property type="molecule type" value="Genomic_DNA"/>
</dbReference>
<dbReference type="RefSeq" id="WP_000372335.1">
    <property type="nucleotide sequence ID" value="NC_012125.1"/>
</dbReference>
<dbReference type="SMR" id="C0PZ83"/>
<dbReference type="KEGG" id="sei:SPC_1202"/>
<dbReference type="HOGENOM" id="CLU_068224_2_0_6"/>
<dbReference type="UniPathway" id="UPA00560"/>
<dbReference type="Proteomes" id="UP000001599">
    <property type="component" value="Chromosome"/>
</dbReference>
<dbReference type="GO" id="GO:0009350">
    <property type="term" value="C:ethanolamine ammonia-lyase complex"/>
    <property type="evidence" value="ECO:0007669"/>
    <property type="project" value="UniProtKB-UniRule"/>
</dbReference>
<dbReference type="GO" id="GO:0031471">
    <property type="term" value="C:ethanolamine degradation polyhedral organelle"/>
    <property type="evidence" value="ECO:0007669"/>
    <property type="project" value="UniProtKB-UniRule"/>
</dbReference>
<dbReference type="GO" id="GO:0031419">
    <property type="term" value="F:cobalamin binding"/>
    <property type="evidence" value="ECO:0007669"/>
    <property type="project" value="UniProtKB-UniRule"/>
</dbReference>
<dbReference type="GO" id="GO:0008851">
    <property type="term" value="F:ethanolamine ammonia-lyase activity"/>
    <property type="evidence" value="ECO:0007669"/>
    <property type="project" value="UniProtKB-UniRule"/>
</dbReference>
<dbReference type="GO" id="GO:0006520">
    <property type="term" value="P:amino acid metabolic process"/>
    <property type="evidence" value="ECO:0007669"/>
    <property type="project" value="InterPro"/>
</dbReference>
<dbReference type="GO" id="GO:0046336">
    <property type="term" value="P:ethanolamine catabolic process"/>
    <property type="evidence" value="ECO:0007669"/>
    <property type="project" value="UniProtKB-UniRule"/>
</dbReference>
<dbReference type="FunFam" id="3.40.50.11240:FF:000001">
    <property type="entry name" value="Ethanolamine ammonia-lyase light chain"/>
    <property type="match status" value="1"/>
</dbReference>
<dbReference type="Gene3D" id="6.10.140.690">
    <property type="match status" value="1"/>
</dbReference>
<dbReference type="Gene3D" id="6.10.250.2060">
    <property type="match status" value="1"/>
</dbReference>
<dbReference type="Gene3D" id="3.40.50.11240">
    <property type="entry name" value="Ethanolamine ammonia-lyase light chain (EutC)"/>
    <property type="match status" value="1"/>
</dbReference>
<dbReference type="HAMAP" id="MF_00601">
    <property type="entry name" value="EutC"/>
    <property type="match status" value="1"/>
</dbReference>
<dbReference type="InterPro" id="IPR009246">
    <property type="entry name" value="EutC"/>
</dbReference>
<dbReference type="InterPro" id="IPR042251">
    <property type="entry name" value="EutC_C"/>
</dbReference>
<dbReference type="NCBIfam" id="NF003971">
    <property type="entry name" value="PRK05465.1"/>
    <property type="match status" value="1"/>
</dbReference>
<dbReference type="PANTHER" id="PTHR39330">
    <property type="entry name" value="ETHANOLAMINE AMMONIA-LYASE LIGHT CHAIN"/>
    <property type="match status" value="1"/>
</dbReference>
<dbReference type="PANTHER" id="PTHR39330:SF1">
    <property type="entry name" value="ETHANOLAMINE AMMONIA-LYASE SMALL SUBUNIT"/>
    <property type="match status" value="1"/>
</dbReference>
<dbReference type="Pfam" id="PF05985">
    <property type="entry name" value="EutC"/>
    <property type="match status" value="1"/>
</dbReference>
<dbReference type="PIRSF" id="PIRSF018982">
    <property type="entry name" value="EutC"/>
    <property type="match status" value="1"/>
</dbReference>
<accession>C0PZ83</accession>
<sequence>MDQKQIEEIVRSVMASMGQDVPQPAAPSTQEGAKPQCAAPTVTESCALDLGSAEAKAWIGVENPHRADVLTELRRSTAARVCTGRAGPRPRTQALLRFLADHSRSKDTVLKEVPEEWVKAQGLLEVRSEISDKNLYLTRPDMGRRLSPEAIDALKSQCVMNPDVQVVVSDGLSTDAITANYEEILPPLLAGLKQAGLNVGTPFFVRYGRVKIEDQIGEILGAKVVILLVGERPGLGQSESLSCYAVYSPRVATTVEADRTCISNIHQGGTPPVEAAAVIVDLAKRMLEQKASGINMTR</sequence>
<organism>
    <name type="scientific">Salmonella paratyphi C (strain RKS4594)</name>
    <dbReference type="NCBI Taxonomy" id="476213"/>
    <lineage>
        <taxon>Bacteria</taxon>
        <taxon>Pseudomonadati</taxon>
        <taxon>Pseudomonadota</taxon>
        <taxon>Gammaproteobacteria</taxon>
        <taxon>Enterobacterales</taxon>
        <taxon>Enterobacteriaceae</taxon>
        <taxon>Salmonella</taxon>
    </lineage>
</organism>
<proteinExistence type="inferred from homology"/>
<evidence type="ECO:0000255" key="1">
    <source>
        <dbReference type="HAMAP-Rule" id="MF_00601"/>
    </source>
</evidence>
<keyword id="KW-1283">Bacterial microcompartment</keyword>
<keyword id="KW-0846">Cobalamin</keyword>
<keyword id="KW-0170">Cobalt</keyword>
<keyword id="KW-0456">Lyase</keyword>